<gene>
    <name type="primary">rbsB</name>
    <name type="synonym">rbsP</name>
    <name type="ordered locus">STM3884</name>
</gene>
<keyword id="KW-0903">Direct protein sequencing</keyword>
<keyword id="KW-0574">Periplasm</keyword>
<keyword id="KW-1185">Reference proteome</keyword>
<keyword id="KW-0732">Signal</keyword>
<keyword id="KW-0762">Sugar transport</keyword>
<keyword id="KW-0813">Transport</keyword>
<proteinExistence type="evidence at protein level"/>
<comment type="function">
    <text evidence="1">Part of the ABC transporter complex RbsABC involved in ribose import. Binds ribose.</text>
</comment>
<comment type="subunit">
    <text evidence="1">The complex is composed of an ATP-binding protein (RbsA), two transmembrane proteins (RbsC) and a solute-binding protein (RbsB).</text>
</comment>
<comment type="subcellular location">
    <subcellularLocation>
        <location evidence="1">Periplasm</location>
    </subcellularLocation>
</comment>
<comment type="similarity">
    <text evidence="3">Belongs to the bacterial solute-binding protein 2 family.</text>
</comment>
<sequence length="296" mass="30963">MNMKKLATLVSAVALSATVSANAMAKDTIALVISTLNNPFFVSLKDGAQKEADKLGYNLVVLDSQNNPAKELANVQDLTVRGTKILLINPTDSDAVGNAVKMANQAKIPVITLDRQATKGDVVSHIASDNVLGGKIAGDYIAKKAGEGAKVIELQGIAGTSAARERGEGFQQAVAAHKFNVLASQPADFDRTKGLNVMQNLLTAHPDVQAVFAQNDEMALGALRALQTAGKADVMVVGFDGTPDGEKAVKDGKLAATIAQLPDQIGAKGVEVADKVLKGEKVQAKYPVDLKLVIKQ</sequence>
<accession>P0A2C5</accession>
<accession>P02926</accession>
<dbReference type="EMBL" id="AE006468">
    <property type="protein sequence ID" value="AAL22742.1"/>
    <property type="molecule type" value="Genomic_DNA"/>
</dbReference>
<dbReference type="PIR" id="A03426">
    <property type="entry name" value="JGEBRT"/>
</dbReference>
<dbReference type="RefSeq" id="NP_462783.1">
    <property type="nucleotide sequence ID" value="NC_003197.2"/>
</dbReference>
<dbReference type="RefSeq" id="WP_001056260.1">
    <property type="nucleotide sequence ID" value="NC_003197.2"/>
</dbReference>
<dbReference type="SMR" id="P0A2C5"/>
<dbReference type="STRING" id="99287.STM3884"/>
<dbReference type="PaxDb" id="99287-STM3884"/>
<dbReference type="GeneID" id="1255411"/>
<dbReference type="KEGG" id="stm:STM3884"/>
<dbReference type="PATRIC" id="fig|99287.12.peg.4114"/>
<dbReference type="HOGENOM" id="CLU_037628_3_2_6"/>
<dbReference type="OMA" id="QAVFAHN"/>
<dbReference type="PhylomeDB" id="P0A2C5"/>
<dbReference type="BioCyc" id="SENT99287:STM3884-MONOMER"/>
<dbReference type="Proteomes" id="UP000001014">
    <property type="component" value="Chromosome"/>
</dbReference>
<dbReference type="GO" id="GO:0030288">
    <property type="term" value="C:outer membrane-bounded periplasmic space"/>
    <property type="evidence" value="ECO:0000318"/>
    <property type="project" value="GO_Central"/>
</dbReference>
<dbReference type="GO" id="GO:0048029">
    <property type="term" value="F:monosaccharide binding"/>
    <property type="evidence" value="ECO:0000318"/>
    <property type="project" value="GO_Central"/>
</dbReference>
<dbReference type="GO" id="GO:0055085">
    <property type="term" value="P:transmembrane transport"/>
    <property type="evidence" value="ECO:0000318"/>
    <property type="project" value="GO_Central"/>
</dbReference>
<dbReference type="CDD" id="cd06323">
    <property type="entry name" value="PBP1_ribose_binding"/>
    <property type="match status" value="1"/>
</dbReference>
<dbReference type="FunFam" id="3.40.50.2300:FF:000036">
    <property type="entry name" value="D-ribose ABC transporter substrate-binding protein"/>
    <property type="match status" value="1"/>
</dbReference>
<dbReference type="Gene3D" id="3.40.50.2300">
    <property type="match status" value="2"/>
</dbReference>
<dbReference type="InterPro" id="IPR028082">
    <property type="entry name" value="Peripla_BP_I"/>
</dbReference>
<dbReference type="InterPro" id="IPR025997">
    <property type="entry name" value="SBP_2_dom"/>
</dbReference>
<dbReference type="NCBIfam" id="NF007936">
    <property type="entry name" value="PRK10653.1"/>
    <property type="match status" value="1"/>
</dbReference>
<dbReference type="PANTHER" id="PTHR46847">
    <property type="entry name" value="D-ALLOSE-BINDING PERIPLASMIC PROTEIN-RELATED"/>
    <property type="match status" value="1"/>
</dbReference>
<dbReference type="PANTHER" id="PTHR46847:SF1">
    <property type="entry name" value="D-ALLOSE-BINDING PERIPLASMIC PROTEIN-RELATED"/>
    <property type="match status" value="1"/>
</dbReference>
<dbReference type="Pfam" id="PF13407">
    <property type="entry name" value="Peripla_BP_4"/>
    <property type="match status" value="1"/>
</dbReference>
<dbReference type="SUPFAM" id="SSF53822">
    <property type="entry name" value="Periplasmic binding protein-like I"/>
    <property type="match status" value="1"/>
</dbReference>
<reference key="1">
    <citation type="journal article" date="2001" name="Nature">
        <title>Complete genome sequence of Salmonella enterica serovar Typhimurium LT2.</title>
        <authorList>
            <person name="McClelland M."/>
            <person name="Sanderson K.E."/>
            <person name="Spieth J."/>
            <person name="Clifton S.W."/>
            <person name="Latreille P."/>
            <person name="Courtney L."/>
            <person name="Porwollik S."/>
            <person name="Ali J."/>
            <person name="Dante M."/>
            <person name="Du F."/>
            <person name="Hou S."/>
            <person name="Layman D."/>
            <person name="Leonard S."/>
            <person name="Nguyen C."/>
            <person name="Scott K."/>
            <person name="Holmes A."/>
            <person name="Grewal N."/>
            <person name="Mulvaney E."/>
            <person name="Ryan E."/>
            <person name="Sun H."/>
            <person name="Florea L."/>
            <person name="Miller W."/>
            <person name="Stoneking T."/>
            <person name="Nhan M."/>
            <person name="Waterston R."/>
            <person name="Wilson R.K."/>
        </authorList>
    </citation>
    <scope>NUCLEOTIDE SEQUENCE [LARGE SCALE GENOMIC DNA]</scope>
    <source>
        <strain>LT2 / SGSC1412 / ATCC 700720</strain>
    </source>
</reference>
<reference key="2">
    <citation type="journal article" date="1983" name="J. Biol. Chem.">
        <title>The amino acid sequence of D-ribose-binding protein from Salmonella typhimurium ST1.</title>
        <authorList>
            <person name="Buckenmeyer G.K."/>
            <person name="Hermodson M.A."/>
        </authorList>
    </citation>
    <scope>PROTEIN SEQUENCE OF 26-60; 103-122; 219-233 AND 236-269</scope>
    <source>
        <strain>ATCC 29595 / ST1</strain>
    </source>
</reference>
<evidence type="ECO:0000250" key="1">
    <source>
        <dbReference type="UniProtKB" id="P02925"/>
    </source>
</evidence>
<evidence type="ECO:0000269" key="2">
    <source>
    </source>
</evidence>
<evidence type="ECO:0000305" key="3"/>
<name>RBSB_SALTY</name>
<protein>
    <recommendedName>
        <fullName evidence="1">Ribose import binding protein RbsB</fullName>
    </recommendedName>
</protein>
<organism>
    <name type="scientific">Salmonella typhimurium (strain LT2 / SGSC1412 / ATCC 700720)</name>
    <dbReference type="NCBI Taxonomy" id="99287"/>
    <lineage>
        <taxon>Bacteria</taxon>
        <taxon>Pseudomonadati</taxon>
        <taxon>Pseudomonadota</taxon>
        <taxon>Gammaproteobacteria</taxon>
        <taxon>Enterobacterales</taxon>
        <taxon>Enterobacteriaceae</taxon>
        <taxon>Salmonella</taxon>
    </lineage>
</organism>
<feature type="signal peptide" evidence="2">
    <location>
        <begin position="1"/>
        <end position="25"/>
    </location>
</feature>
<feature type="chain" id="PRO_0000031734" description="Ribose import binding protein RbsB">
    <location>
        <begin position="26"/>
        <end position="296"/>
    </location>
</feature>
<feature type="sequence conflict" description="In Ref. 2; AA sequence." evidence="3" ref="2">
    <original>G</original>
    <variation>T</variation>
    <location>
        <position position="266"/>
    </location>
</feature>